<name>NCBP1_XENTR</name>
<dbReference type="EMBL" id="CR855671">
    <property type="protein sequence ID" value="CAJ83816.1"/>
    <property type="molecule type" value="mRNA"/>
</dbReference>
<dbReference type="EMBL" id="BC075600">
    <property type="protein sequence ID" value="AAH75600.1"/>
    <property type="molecule type" value="mRNA"/>
</dbReference>
<dbReference type="RefSeq" id="NP_001006788.1">
    <property type="nucleotide sequence ID" value="NM_001006787.1"/>
</dbReference>
<dbReference type="SMR" id="Q6DIE2"/>
<dbReference type="FunCoup" id="Q6DIE2">
    <property type="interactions" value="3950"/>
</dbReference>
<dbReference type="STRING" id="8364.ENSXETP00000026225"/>
<dbReference type="PaxDb" id="8364-ENSXETP00000062475"/>
<dbReference type="DNASU" id="448484"/>
<dbReference type="GeneID" id="448484"/>
<dbReference type="KEGG" id="xtr:448484"/>
<dbReference type="AGR" id="Xenbase:XB-GENE-5841194"/>
<dbReference type="CTD" id="4686"/>
<dbReference type="Xenbase" id="XB-GENE-5841194">
    <property type="gene designation" value="ncbp1"/>
</dbReference>
<dbReference type="eggNOG" id="KOG1104">
    <property type="taxonomic scope" value="Eukaryota"/>
</dbReference>
<dbReference type="InParanoid" id="Q6DIE2"/>
<dbReference type="OMA" id="CAAEGLM"/>
<dbReference type="OrthoDB" id="10252707at2759"/>
<dbReference type="Reactome" id="R-XTR-111367">
    <property type="pathway name" value="SLBP independent Processing of Histone Pre-mRNAs"/>
</dbReference>
<dbReference type="Reactome" id="R-XTR-112382">
    <property type="pathway name" value="Formation of RNA Pol II elongation complex"/>
</dbReference>
<dbReference type="Reactome" id="R-XTR-113418">
    <property type="pathway name" value="Formation of the Early Elongation Complex"/>
</dbReference>
<dbReference type="Reactome" id="R-XTR-674695">
    <property type="pathway name" value="RNA Polymerase II Pre-transcription Events"/>
</dbReference>
<dbReference type="Reactome" id="R-XTR-6803529">
    <property type="pathway name" value="FGFR2 alternative splicing"/>
</dbReference>
<dbReference type="Reactome" id="R-XTR-6807505">
    <property type="pathway name" value="RNA polymerase II transcribes snRNA genes"/>
</dbReference>
<dbReference type="Reactome" id="R-XTR-72086">
    <property type="pathway name" value="mRNA Capping"/>
</dbReference>
<dbReference type="Reactome" id="R-XTR-72163">
    <property type="pathway name" value="mRNA Splicing - Major Pathway"/>
</dbReference>
<dbReference type="Reactome" id="R-XTR-72165">
    <property type="pathway name" value="mRNA Splicing - Minor Pathway"/>
</dbReference>
<dbReference type="Reactome" id="R-XTR-72203">
    <property type="pathway name" value="Processing of Capped Intron-Containing Pre-mRNA"/>
</dbReference>
<dbReference type="Reactome" id="R-XTR-73856">
    <property type="pathway name" value="RNA Polymerase II Transcription Termination"/>
</dbReference>
<dbReference type="Reactome" id="R-XTR-77588">
    <property type="pathway name" value="SLBP Dependent Processing of Replication-Dependent Histone Pre-mRNAs"/>
</dbReference>
<dbReference type="Reactome" id="R-XTR-975956">
    <property type="pathway name" value="Nonsense Mediated Decay (NMD) independent of the Exon Junction Complex (EJC)"/>
</dbReference>
<dbReference type="Reactome" id="R-XTR-975957">
    <property type="pathway name" value="Nonsense Mediated Decay (NMD) enhanced by the Exon Junction Complex (EJC)"/>
</dbReference>
<dbReference type="Proteomes" id="UP000008143">
    <property type="component" value="Chromosome 1"/>
</dbReference>
<dbReference type="Bgee" id="ENSXETG00000010179">
    <property type="expression patterns" value="Expressed in blastula and 13 other cell types or tissues"/>
</dbReference>
<dbReference type="GO" id="GO:0005737">
    <property type="term" value="C:cytoplasm"/>
    <property type="evidence" value="ECO:0007669"/>
    <property type="project" value="UniProtKB-SubCell"/>
</dbReference>
<dbReference type="GO" id="GO:0005846">
    <property type="term" value="C:nuclear cap binding complex"/>
    <property type="evidence" value="ECO:0000250"/>
    <property type="project" value="UniProtKB"/>
</dbReference>
<dbReference type="GO" id="GO:0005634">
    <property type="term" value="C:nucleus"/>
    <property type="evidence" value="ECO:0000250"/>
    <property type="project" value="UniProtKB"/>
</dbReference>
<dbReference type="GO" id="GO:0000339">
    <property type="term" value="F:RNA cap binding"/>
    <property type="evidence" value="ECO:0007669"/>
    <property type="project" value="InterPro"/>
</dbReference>
<dbReference type="GO" id="GO:0006370">
    <property type="term" value="P:7-methylguanosine mRNA capping"/>
    <property type="evidence" value="ECO:0000250"/>
    <property type="project" value="UniProtKB"/>
</dbReference>
<dbReference type="GO" id="GO:0006406">
    <property type="term" value="P:mRNA export from nucleus"/>
    <property type="evidence" value="ECO:0000250"/>
    <property type="project" value="UniProtKB"/>
</dbReference>
<dbReference type="GO" id="GO:0016071">
    <property type="term" value="P:mRNA metabolic process"/>
    <property type="evidence" value="ECO:0000250"/>
    <property type="project" value="UniProtKB"/>
</dbReference>
<dbReference type="GO" id="GO:0000184">
    <property type="term" value="P:nuclear-transcribed mRNA catabolic process, nonsense-mediated decay"/>
    <property type="evidence" value="ECO:0000250"/>
    <property type="project" value="UniProtKB"/>
</dbReference>
<dbReference type="GO" id="GO:0031442">
    <property type="term" value="P:positive regulation of mRNA 3'-end processing"/>
    <property type="evidence" value="ECO:0000250"/>
    <property type="project" value="UniProtKB"/>
</dbReference>
<dbReference type="GO" id="GO:0006446">
    <property type="term" value="P:regulation of translational initiation"/>
    <property type="evidence" value="ECO:0000250"/>
    <property type="project" value="UniProtKB"/>
</dbReference>
<dbReference type="GO" id="GO:0031047">
    <property type="term" value="P:regulatory ncRNA-mediated gene silencing"/>
    <property type="evidence" value="ECO:0007669"/>
    <property type="project" value="UniProtKB-KW"/>
</dbReference>
<dbReference type="GO" id="GO:0008380">
    <property type="term" value="P:RNA splicing"/>
    <property type="evidence" value="ECO:0007669"/>
    <property type="project" value="UniProtKB-KW"/>
</dbReference>
<dbReference type="FunFam" id="1.25.40.180:FF:000021">
    <property type="entry name" value="Nuclear cap binding protein subunit 1"/>
    <property type="match status" value="1"/>
</dbReference>
<dbReference type="FunFam" id="1.25.40.180:FF:000010">
    <property type="entry name" value="Nuclear cap-binding protein subunit 1"/>
    <property type="match status" value="1"/>
</dbReference>
<dbReference type="Gene3D" id="1.25.40.180">
    <property type="match status" value="3"/>
</dbReference>
<dbReference type="InterPro" id="IPR016024">
    <property type="entry name" value="ARM-type_fold"/>
</dbReference>
<dbReference type="InterPro" id="IPR027159">
    <property type="entry name" value="CBP80"/>
</dbReference>
<dbReference type="InterPro" id="IPR015172">
    <property type="entry name" value="MIF4G-like_typ-1"/>
</dbReference>
<dbReference type="InterPro" id="IPR015174">
    <property type="entry name" value="MIF4G-like_typ-2"/>
</dbReference>
<dbReference type="InterPro" id="IPR003890">
    <property type="entry name" value="MIF4G-like_typ-3"/>
</dbReference>
<dbReference type="PANTHER" id="PTHR12412">
    <property type="entry name" value="CAP BINDING PROTEIN"/>
    <property type="match status" value="1"/>
</dbReference>
<dbReference type="PANTHER" id="PTHR12412:SF2">
    <property type="entry name" value="NUCLEAR CAP-BINDING PROTEIN SUBUNIT 1"/>
    <property type="match status" value="1"/>
</dbReference>
<dbReference type="Pfam" id="PF02854">
    <property type="entry name" value="MIF4G"/>
    <property type="match status" value="1"/>
</dbReference>
<dbReference type="Pfam" id="PF09088">
    <property type="entry name" value="MIF4G_like"/>
    <property type="match status" value="1"/>
</dbReference>
<dbReference type="Pfam" id="PF09090">
    <property type="entry name" value="MIF4G_like_2"/>
    <property type="match status" value="1"/>
</dbReference>
<dbReference type="SMART" id="SM00543">
    <property type="entry name" value="MIF4G"/>
    <property type="match status" value="1"/>
</dbReference>
<dbReference type="SUPFAM" id="SSF48371">
    <property type="entry name" value="ARM repeat"/>
    <property type="match status" value="3"/>
</dbReference>
<evidence type="ECO:0000250" key="1">
    <source>
        <dbReference type="UniProtKB" id="Q09161"/>
    </source>
</evidence>
<evidence type="ECO:0000255" key="2"/>
<evidence type="ECO:0000256" key="3">
    <source>
        <dbReference type="SAM" id="MobiDB-lite"/>
    </source>
</evidence>
<evidence type="ECO:0000305" key="4"/>
<reference key="1">
    <citation type="submission" date="2006-03" db="EMBL/GenBank/DDBJ databases">
        <authorList>
            <consortium name="Sanger Xenopus tropicalis EST/cDNA project"/>
        </authorList>
    </citation>
    <scope>NUCLEOTIDE SEQUENCE [LARGE SCALE MRNA]</scope>
    <source>
        <tissue>Gastrula</tissue>
    </source>
</reference>
<reference key="2">
    <citation type="submission" date="2004-06" db="EMBL/GenBank/DDBJ databases">
        <authorList>
            <consortium name="NIH - Xenopus Gene Collection (XGC) project"/>
        </authorList>
    </citation>
    <scope>NUCLEOTIDE SEQUENCE [LARGE SCALE MRNA]</scope>
    <source>
        <tissue>Embryo</tissue>
    </source>
</reference>
<gene>
    <name type="primary">ncbp1</name>
    <name type="synonym">cbp80</name>
    <name type="ORF">TGas055a14.1</name>
</gene>
<organism>
    <name type="scientific">Xenopus tropicalis</name>
    <name type="common">Western clawed frog</name>
    <name type="synonym">Silurana tropicalis</name>
    <dbReference type="NCBI Taxonomy" id="8364"/>
    <lineage>
        <taxon>Eukaryota</taxon>
        <taxon>Metazoa</taxon>
        <taxon>Chordata</taxon>
        <taxon>Craniata</taxon>
        <taxon>Vertebrata</taxon>
        <taxon>Euteleostomi</taxon>
        <taxon>Amphibia</taxon>
        <taxon>Batrachia</taxon>
        <taxon>Anura</taxon>
        <taxon>Pipoidea</taxon>
        <taxon>Pipidae</taxon>
        <taxon>Xenopodinae</taxon>
        <taxon>Xenopus</taxon>
        <taxon>Silurana</taxon>
    </lineage>
</organism>
<comment type="function">
    <text evidence="1">Component of the cap-binding complex (CBC), which binds cotranscriptionally to the 5'-cap of pre-mRNAs and is involved in various processes such as pre-mRNA splicing, translation regulation, nonsense-mediated mRNA decay, RNA-mediated gene silencing (RNAi) by microRNAs (miRNAs) and mRNA export. The CBC complex is involved in mRNA export from the nucleus, leading to the recruitment of the mRNA export machinery to the 5'-end of mRNA and to mRNA export in a 5' to 3' direction through the nuclear pore. The CBC complex is also involved in mediating U snRNA and intronless mRNAs export from the nucleus. The CBC complex is essential for a pioneer round of mRNA translation, before steady state translation when the CBC complex is replaced by cytoplasmic cap-binding protein eIF4E. The pioneer round of mRNA translation mediated by the CBC complex plays a central role in nonsense-mediated mRNA decay (NMD), NMD only taking place in mRNAs bound to the CBC complex, but not on eIF4E-bound mRNAs. The CBC complex enhances NMD in mRNAs containing at least one exon-junction complex (EJC), promoting the interaction between UPF1 and UPF2. The CBC complex is also involved in 'failsafe' NMD, which is independent of the EJC complex, while it does not participate in Staufen-mediated mRNA decay (SMD). During cell proliferation, the CBC complex is also involved in microRNAs (miRNAs) biogenesis via its interaction with SRRT/ARS2 and is required for miRNA-mediated RNA interference. The CBC complex also acts as a negative regulator of parn, thereby acting as an inhibitor of mRNA deadenylation. In the CBC complex, ncbp1/cbp80 does not bind directly capped RNAs (m7GpppG-capped RNA) but is required to stabilize the movement of the N-terminal loop of ncbp2/cbp20 and lock the CBC into a high affinity cap-binding state with the cap structure. Associates with NCBP3 to form an alternative cap-binding complex (CBC) which plays a key role in mRNA export. The conventional CBC with NCBP2 binds both small nuclear RNA (snRNA) and messenger (mRNA) and is involved in their export from the nucleus whereas the alternative CBC with NCBP3 does not bind snRNA and associates only with mRNA thereby playing a role only in mRNA export (By similarity).</text>
</comment>
<comment type="subunit">
    <text evidence="1">Component of the nuclear cap-binding complex (CBC), a heterodimer composed of ncbp1/cbp80 and ncbp2/cbp20 that interacts with m7GpppG-capped RNA. Component of an alternative nuclear cap-binding complex (CBC) composed of ncbp1/cbp80 and ncbp3 (By similarity).</text>
</comment>
<comment type="subcellular location">
    <subcellularLocation>
        <location evidence="1">Nucleus</location>
    </subcellularLocation>
    <subcellularLocation>
        <location evidence="1">Cytoplasm</location>
    </subcellularLocation>
</comment>
<comment type="similarity">
    <text evidence="4">Belongs to the NCBP1 family.</text>
</comment>
<accession>Q6DIE2</accession>
<feature type="chain" id="PRO_0000239784" description="Nuclear cap-binding protein subunit 1">
    <location>
        <begin position="1"/>
        <end position="791"/>
    </location>
</feature>
<feature type="domain" description="MIF4G">
    <location>
        <begin position="28"/>
        <end position="240"/>
    </location>
</feature>
<feature type="region of interest" description="Disordered" evidence="3">
    <location>
        <begin position="1"/>
        <end position="24"/>
    </location>
</feature>
<feature type="region of interest" description="Disordered" evidence="3">
    <location>
        <begin position="668"/>
        <end position="687"/>
    </location>
</feature>
<feature type="coiled-coil region" evidence="2">
    <location>
        <begin position="641"/>
        <end position="714"/>
    </location>
</feature>
<feature type="compositionally biased region" description="Basic and acidic residues" evidence="3">
    <location>
        <begin position="1"/>
        <end position="14"/>
    </location>
</feature>
<protein>
    <recommendedName>
        <fullName>Nuclear cap-binding protein subunit 1</fullName>
    </recommendedName>
    <alternativeName>
        <fullName>80 kDa nuclear cap-binding protein</fullName>
        <shortName>CBP80</shortName>
        <shortName>NCBP 80 kDa subunit</shortName>
    </alternativeName>
</protein>
<proteinExistence type="evidence at transcript level"/>
<sequence>MSRRRHSDENDGGPHHKRRKTSEPLEIEDRLESLICRVGEKSTSSLESNLEGLAGVLEADLPNYKSKILRILCSVARTLPEKMTVYTTLVGLLNARNYNFGGEFVEAMIRHLKETIKLNAYNEAVYLVRFLCDLVNCHVIAAPSMVAMFESFVGVTQEEDIPQVRSDWYVYAVLSSLPWVGKELYEKKDVEMDRILSQIEAYLKQRQKLHVSILQVWSAEKPHPQEEYLDCLWAQIQKLKKDRWQERHILRPYLAFDSVLCEALQHNLPPFTPPPHTEDSVYPVPRVVFRMFDYTDAPEGPVMPGSHSVERFVIEENLHCILRSHWRERKTCAAQLLSYPEKNKIPLNYHIVEVIFGELFQLPNPPHLDVMYTTLLIELCKLQPGSLPQVLAQASEMLYTRLDTMNTICIDRFINWFSHHLSNFQFRWNWEDWSDCLSQDLDKPKPQFVREVLEKCMRLSYHQRILDIVPAAFSALYPASPSCVFKYGDESNSALPGYSVAVALTNAIKNKASDKEIFNILKDIPNPNQDDDDDEGISFNPLKIEVFVQTLLSLASKSFSHSFSALAKFHDIFKALSESDEGKLHILRVVYDIWKNHPQMIAVLVDKMIRTQIVDCAAVANWIFSPELSRDFPRFYIWEILHSTIRKMNKHVQKIQKELEDMKLRLAKQHKHRDSDDNDEDSGRKDGPLEEQIERLQEKVESAQSEQKNLFLVIFQRFIMILTEHLVRCETGGIDVNTAWYKNCRERLQQIFLQHHQIIQQYMVTLENLLFTAELDHHILTVFQQFCALQS</sequence>
<keyword id="KW-0175">Coiled coil</keyword>
<keyword id="KW-0963">Cytoplasm</keyword>
<keyword id="KW-0506">mRNA capping</keyword>
<keyword id="KW-0507">mRNA processing</keyword>
<keyword id="KW-0508">mRNA splicing</keyword>
<keyword id="KW-0509">mRNA transport</keyword>
<keyword id="KW-0866">Nonsense-mediated mRNA decay</keyword>
<keyword id="KW-0539">Nucleus</keyword>
<keyword id="KW-1185">Reference proteome</keyword>
<keyword id="KW-0943">RNA-mediated gene silencing</keyword>
<keyword id="KW-0810">Translation regulation</keyword>
<keyword id="KW-0813">Transport</keyword>